<proteinExistence type="evidence at protein level"/>
<dbReference type="EMBL" id="AC022382">
    <property type="status" value="NOT_ANNOTATED_CDS"/>
    <property type="molecule type" value="Genomic_DNA"/>
</dbReference>
<dbReference type="EMBL" id="CH471055">
    <property type="protein sequence ID" value="EAW63970.1"/>
    <property type="molecule type" value="Genomic_DNA"/>
</dbReference>
<dbReference type="EMBL" id="BC130375">
    <property type="protein sequence ID" value="AAI30376.1"/>
    <property type="molecule type" value="mRNA"/>
</dbReference>
<dbReference type="EMBL" id="BC035735">
    <property type="protein sequence ID" value="AAH35735.2"/>
    <property type="molecule type" value="mRNA"/>
</dbReference>
<dbReference type="CCDS" id="CCDS2574.2">
    <molecule id="Q8IYJ1-1"/>
</dbReference>
<dbReference type="CCDS" id="CCDS77695.1">
    <molecule id="Q8IYJ1-2"/>
</dbReference>
<dbReference type="RefSeq" id="NP_001295317.1">
    <molecule id="Q8IYJ1-2"/>
    <property type="nucleotide sequence ID" value="NM_001308388.2"/>
</dbReference>
<dbReference type="RefSeq" id="NP_705899.2">
    <molecule id="Q8IYJ1-1"/>
    <property type="nucleotide sequence ID" value="NM_153635.3"/>
</dbReference>
<dbReference type="SMR" id="Q8IYJ1"/>
<dbReference type="BioGRID" id="127405">
    <property type="interactions" value="21"/>
</dbReference>
<dbReference type="FunCoup" id="Q8IYJ1">
    <property type="interactions" value="41"/>
</dbReference>
<dbReference type="IntAct" id="Q8IYJ1">
    <property type="interactions" value="16"/>
</dbReference>
<dbReference type="MINT" id="Q8IYJ1"/>
<dbReference type="STRING" id="9606.ENSP00000373343"/>
<dbReference type="GlyCosmos" id="Q8IYJ1">
    <property type="glycosylation" value="2 sites, 1 glycan"/>
</dbReference>
<dbReference type="GlyGen" id="Q8IYJ1">
    <property type="glycosylation" value="2 sites, 1 O-linked glycan (1 site)"/>
</dbReference>
<dbReference type="iPTMnet" id="Q8IYJ1"/>
<dbReference type="PhosphoSitePlus" id="Q8IYJ1"/>
<dbReference type="BioMuta" id="CPNE9"/>
<dbReference type="DMDM" id="300669696"/>
<dbReference type="jPOST" id="Q8IYJ1"/>
<dbReference type="MassIVE" id="Q8IYJ1"/>
<dbReference type="PaxDb" id="9606-ENSP00000373343"/>
<dbReference type="PeptideAtlas" id="Q8IYJ1"/>
<dbReference type="ProteomicsDB" id="71184">
    <molecule id="Q8IYJ1-1"/>
</dbReference>
<dbReference type="ProteomicsDB" id="71185">
    <molecule id="Q8IYJ1-2"/>
</dbReference>
<dbReference type="Pumba" id="Q8IYJ1"/>
<dbReference type="Antibodypedia" id="44749">
    <property type="antibodies" value="107 antibodies from 16 providers"/>
</dbReference>
<dbReference type="DNASU" id="151835"/>
<dbReference type="Ensembl" id="ENST00000383831.7">
    <molecule id="Q8IYJ1-2"/>
    <property type="protein sequence ID" value="ENSP00000373342.3"/>
    <property type="gene ID" value="ENSG00000144550.14"/>
</dbReference>
<dbReference type="Ensembl" id="ENST00000383832.8">
    <molecule id="Q8IYJ1-1"/>
    <property type="protein sequence ID" value="ENSP00000373343.3"/>
    <property type="gene ID" value="ENSG00000144550.14"/>
</dbReference>
<dbReference type="GeneID" id="151835"/>
<dbReference type="KEGG" id="hsa:151835"/>
<dbReference type="MANE-Select" id="ENST00000383832.8">
    <property type="protein sequence ID" value="ENSP00000373343.3"/>
    <property type="RefSeq nucleotide sequence ID" value="NM_153635.3"/>
    <property type="RefSeq protein sequence ID" value="NP_705899.2"/>
</dbReference>
<dbReference type="UCSC" id="uc062gli.1">
    <molecule id="Q8IYJ1-1"/>
    <property type="organism name" value="human"/>
</dbReference>
<dbReference type="AGR" id="HGNC:24336"/>
<dbReference type="CTD" id="151835"/>
<dbReference type="DisGeNET" id="151835"/>
<dbReference type="GeneCards" id="CPNE9"/>
<dbReference type="HGNC" id="HGNC:24336">
    <property type="gene designation" value="CPNE9"/>
</dbReference>
<dbReference type="HPA" id="ENSG00000144550">
    <property type="expression patterns" value="Tissue enriched (brain)"/>
</dbReference>
<dbReference type="neXtProt" id="NX_Q8IYJ1"/>
<dbReference type="OpenTargets" id="ENSG00000144550"/>
<dbReference type="PharmGKB" id="PA142672082"/>
<dbReference type="VEuPathDB" id="HostDB:ENSG00000144550"/>
<dbReference type="eggNOG" id="KOG1327">
    <property type="taxonomic scope" value="Eukaryota"/>
</dbReference>
<dbReference type="GeneTree" id="ENSGT00940000159659"/>
<dbReference type="HOGENOM" id="CLU_020452_3_2_1"/>
<dbReference type="InParanoid" id="Q8IYJ1"/>
<dbReference type="OMA" id="DMHATIR"/>
<dbReference type="OrthoDB" id="5855668at2759"/>
<dbReference type="PAN-GO" id="Q8IYJ1">
    <property type="GO annotations" value="3 GO annotations based on evolutionary models"/>
</dbReference>
<dbReference type="PhylomeDB" id="Q8IYJ1"/>
<dbReference type="TreeFam" id="TF316419"/>
<dbReference type="PathwayCommons" id="Q8IYJ1"/>
<dbReference type="SignaLink" id="Q8IYJ1"/>
<dbReference type="BioGRID-ORCS" id="151835">
    <property type="hits" value="8 hits in 1144 CRISPR screens"/>
</dbReference>
<dbReference type="GenomeRNAi" id="151835"/>
<dbReference type="Pharos" id="Q8IYJ1">
    <property type="development level" value="Tbio"/>
</dbReference>
<dbReference type="PRO" id="PR:Q8IYJ1"/>
<dbReference type="Proteomes" id="UP000005640">
    <property type="component" value="Chromosome 3"/>
</dbReference>
<dbReference type="RNAct" id="Q8IYJ1">
    <property type="molecule type" value="protein"/>
</dbReference>
<dbReference type="Bgee" id="ENSG00000144550">
    <property type="expression patterns" value="Expressed in lateral nuclear group of thalamus and 127 other cell types or tissues"/>
</dbReference>
<dbReference type="ExpressionAtlas" id="Q8IYJ1">
    <property type="expression patterns" value="baseline and differential"/>
</dbReference>
<dbReference type="GO" id="GO:0070062">
    <property type="term" value="C:extracellular exosome"/>
    <property type="evidence" value="ECO:0007005"/>
    <property type="project" value="UniProtKB"/>
</dbReference>
<dbReference type="GO" id="GO:0005615">
    <property type="term" value="C:extracellular space"/>
    <property type="evidence" value="ECO:0007005"/>
    <property type="project" value="UniProtKB"/>
</dbReference>
<dbReference type="GO" id="GO:0005886">
    <property type="term" value="C:plasma membrane"/>
    <property type="evidence" value="ECO:0000318"/>
    <property type="project" value="GO_Central"/>
</dbReference>
<dbReference type="GO" id="GO:0005544">
    <property type="term" value="F:calcium-dependent phospholipid binding"/>
    <property type="evidence" value="ECO:0000318"/>
    <property type="project" value="GO_Central"/>
</dbReference>
<dbReference type="GO" id="GO:0046872">
    <property type="term" value="F:metal ion binding"/>
    <property type="evidence" value="ECO:0007669"/>
    <property type="project" value="UniProtKB-KW"/>
</dbReference>
<dbReference type="GO" id="GO:0030154">
    <property type="term" value="P:cell differentiation"/>
    <property type="evidence" value="ECO:0007669"/>
    <property type="project" value="UniProtKB-KW"/>
</dbReference>
<dbReference type="GO" id="GO:0071277">
    <property type="term" value="P:cellular response to calcium ion"/>
    <property type="evidence" value="ECO:0000318"/>
    <property type="project" value="GO_Central"/>
</dbReference>
<dbReference type="GO" id="GO:1903861">
    <property type="term" value="P:positive regulation of dendrite extension"/>
    <property type="evidence" value="ECO:0000314"/>
    <property type="project" value="UniProtKB"/>
</dbReference>
<dbReference type="CDD" id="cd04048">
    <property type="entry name" value="C2A_Copine"/>
    <property type="match status" value="1"/>
</dbReference>
<dbReference type="CDD" id="cd04047">
    <property type="entry name" value="C2B_Copine"/>
    <property type="match status" value="1"/>
</dbReference>
<dbReference type="CDD" id="cd01459">
    <property type="entry name" value="vWA_copine_like"/>
    <property type="match status" value="1"/>
</dbReference>
<dbReference type="FunFam" id="2.60.40.150:FF:000013">
    <property type="entry name" value="copine-9 isoform X1"/>
    <property type="match status" value="1"/>
</dbReference>
<dbReference type="FunFam" id="2.60.40.150:FF:000127">
    <property type="entry name" value="copine-9 isoform X2"/>
    <property type="match status" value="1"/>
</dbReference>
<dbReference type="Gene3D" id="2.60.40.150">
    <property type="entry name" value="C2 domain"/>
    <property type="match status" value="2"/>
</dbReference>
<dbReference type="InterPro" id="IPR000008">
    <property type="entry name" value="C2_dom"/>
</dbReference>
<dbReference type="InterPro" id="IPR035892">
    <property type="entry name" value="C2_domain_sf"/>
</dbReference>
<dbReference type="InterPro" id="IPR037768">
    <property type="entry name" value="C2B_Copine"/>
</dbReference>
<dbReference type="InterPro" id="IPR045052">
    <property type="entry name" value="Copine"/>
</dbReference>
<dbReference type="InterPro" id="IPR010734">
    <property type="entry name" value="Copine_C"/>
</dbReference>
<dbReference type="InterPro" id="IPR002035">
    <property type="entry name" value="VWF_A"/>
</dbReference>
<dbReference type="InterPro" id="IPR036465">
    <property type="entry name" value="vWFA_dom_sf"/>
</dbReference>
<dbReference type="PANTHER" id="PTHR10857">
    <property type="entry name" value="COPINE"/>
    <property type="match status" value="1"/>
</dbReference>
<dbReference type="PANTHER" id="PTHR10857:SF112">
    <property type="entry name" value="COPINE-9"/>
    <property type="match status" value="1"/>
</dbReference>
<dbReference type="Pfam" id="PF00168">
    <property type="entry name" value="C2"/>
    <property type="match status" value="2"/>
</dbReference>
<dbReference type="Pfam" id="PF07002">
    <property type="entry name" value="Copine"/>
    <property type="match status" value="1"/>
</dbReference>
<dbReference type="SMART" id="SM00239">
    <property type="entry name" value="C2"/>
    <property type="match status" value="2"/>
</dbReference>
<dbReference type="SMART" id="SM00327">
    <property type="entry name" value="VWA"/>
    <property type="match status" value="1"/>
</dbReference>
<dbReference type="SUPFAM" id="SSF49562">
    <property type="entry name" value="C2 domain (Calcium/lipid-binding domain, CaLB)"/>
    <property type="match status" value="2"/>
</dbReference>
<dbReference type="SUPFAM" id="SSF53300">
    <property type="entry name" value="vWA-like"/>
    <property type="match status" value="1"/>
</dbReference>
<dbReference type="PROSITE" id="PS50004">
    <property type="entry name" value="C2"/>
    <property type="match status" value="2"/>
</dbReference>
<dbReference type="PROSITE" id="PS50234">
    <property type="entry name" value="VWFA"/>
    <property type="match status" value="1"/>
</dbReference>
<reference key="1">
    <citation type="journal article" date="2006" name="Nature">
        <title>The DNA sequence, annotation and analysis of human chromosome 3.</title>
        <authorList>
            <person name="Muzny D.M."/>
            <person name="Scherer S.E."/>
            <person name="Kaul R."/>
            <person name="Wang J."/>
            <person name="Yu J."/>
            <person name="Sudbrak R."/>
            <person name="Buhay C.J."/>
            <person name="Chen R."/>
            <person name="Cree A."/>
            <person name="Ding Y."/>
            <person name="Dugan-Rocha S."/>
            <person name="Gill R."/>
            <person name="Gunaratne P."/>
            <person name="Harris R.A."/>
            <person name="Hawes A.C."/>
            <person name="Hernandez J."/>
            <person name="Hodgson A.V."/>
            <person name="Hume J."/>
            <person name="Jackson A."/>
            <person name="Khan Z.M."/>
            <person name="Kovar-Smith C."/>
            <person name="Lewis L.R."/>
            <person name="Lozado R.J."/>
            <person name="Metzker M.L."/>
            <person name="Milosavljevic A."/>
            <person name="Miner G.R."/>
            <person name="Morgan M.B."/>
            <person name="Nazareth L.V."/>
            <person name="Scott G."/>
            <person name="Sodergren E."/>
            <person name="Song X.-Z."/>
            <person name="Steffen D."/>
            <person name="Wei S."/>
            <person name="Wheeler D.A."/>
            <person name="Wright M.W."/>
            <person name="Worley K.C."/>
            <person name="Yuan Y."/>
            <person name="Zhang Z."/>
            <person name="Adams C.Q."/>
            <person name="Ansari-Lari M.A."/>
            <person name="Ayele M."/>
            <person name="Brown M.J."/>
            <person name="Chen G."/>
            <person name="Chen Z."/>
            <person name="Clendenning J."/>
            <person name="Clerc-Blankenburg K.P."/>
            <person name="Chen R."/>
            <person name="Chen Z."/>
            <person name="Davis C."/>
            <person name="Delgado O."/>
            <person name="Dinh H.H."/>
            <person name="Dong W."/>
            <person name="Draper H."/>
            <person name="Ernst S."/>
            <person name="Fu G."/>
            <person name="Gonzalez-Garay M.L."/>
            <person name="Garcia D.K."/>
            <person name="Gillett W."/>
            <person name="Gu J."/>
            <person name="Hao B."/>
            <person name="Haugen E."/>
            <person name="Havlak P."/>
            <person name="He X."/>
            <person name="Hennig S."/>
            <person name="Hu S."/>
            <person name="Huang W."/>
            <person name="Jackson L.R."/>
            <person name="Jacob L.S."/>
            <person name="Kelly S.H."/>
            <person name="Kube M."/>
            <person name="Levy R."/>
            <person name="Li Z."/>
            <person name="Liu B."/>
            <person name="Liu J."/>
            <person name="Liu W."/>
            <person name="Lu J."/>
            <person name="Maheshwari M."/>
            <person name="Nguyen B.-V."/>
            <person name="Okwuonu G.O."/>
            <person name="Palmeiri A."/>
            <person name="Pasternak S."/>
            <person name="Perez L.M."/>
            <person name="Phelps K.A."/>
            <person name="Plopper F.J."/>
            <person name="Qiang B."/>
            <person name="Raymond C."/>
            <person name="Rodriguez R."/>
            <person name="Saenphimmachak C."/>
            <person name="Santibanez J."/>
            <person name="Shen H."/>
            <person name="Shen Y."/>
            <person name="Subramanian S."/>
            <person name="Tabor P.E."/>
            <person name="Verduzco D."/>
            <person name="Waldron L."/>
            <person name="Wang J."/>
            <person name="Wang J."/>
            <person name="Wang Q."/>
            <person name="Williams G.A."/>
            <person name="Wong G.K.-S."/>
            <person name="Yao Z."/>
            <person name="Zhang J."/>
            <person name="Zhang X."/>
            <person name="Zhao G."/>
            <person name="Zhou J."/>
            <person name="Zhou Y."/>
            <person name="Nelson D."/>
            <person name="Lehrach H."/>
            <person name="Reinhardt R."/>
            <person name="Naylor S.L."/>
            <person name="Yang H."/>
            <person name="Olson M."/>
            <person name="Weinstock G."/>
            <person name="Gibbs R.A."/>
        </authorList>
    </citation>
    <scope>NUCLEOTIDE SEQUENCE [LARGE SCALE GENOMIC DNA]</scope>
</reference>
<reference key="2">
    <citation type="submission" date="2005-07" db="EMBL/GenBank/DDBJ databases">
        <authorList>
            <person name="Mural R.J."/>
            <person name="Istrail S."/>
            <person name="Sutton G.G."/>
            <person name="Florea L."/>
            <person name="Halpern A.L."/>
            <person name="Mobarry C.M."/>
            <person name="Lippert R."/>
            <person name="Walenz B."/>
            <person name="Shatkay H."/>
            <person name="Dew I."/>
            <person name="Miller J.R."/>
            <person name="Flanigan M.J."/>
            <person name="Edwards N.J."/>
            <person name="Bolanos R."/>
            <person name="Fasulo D."/>
            <person name="Halldorsson B.V."/>
            <person name="Hannenhalli S."/>
            <person name="Turner R."/>
            <person name="Yooseph S."/>
            <person name="Lu F."/>
            <person name="Nusskern D.R."/>
            <person name="Shue B.C."/>
            <person name="Zheng X.H."/>
            <person name="Zhong F."/>
            <person name="Delcher A.L."/>
            <person name="Huson D.H."/>
            <person name="Kravitz S.A."/>
            <person name="Mouchard L."/>
            <person name="Reinert K."/>
            <person name="Remington K.A."/>
            <person name="Clark A.G."/>
            <person name="Waterman M.S."/>
            <person name="Eichler E.E."/>
            <person name="Adams M.D."/>
            <person name="Hunkapiller M.W."/>
            <person name="Myers E.W."/>
            <person name="Venter J.C."/>
        </authorList>
    </citation>
    <scope>NUCLEOTIDE SEQUENCE [LARGE SCALE GENOMIC DNA]</scope>
</reference>
<reference key="3">
    <citation type="journal article" date="2004" name="Genome Res.">
        <title>The status, quality, and expansion of the NIH full-length cDNA project: the Mammalian Gene Collection (MGC).</title>
        <authorList>
            <consortium name="The MGC Project Team"/>
        </authorList>
    </citation>
    <scope>NUCLEOTIDE SEQUENCE [LARGE SCALE MRNA] (ISOFORMS 1 AND 2)</scope>
    <source>
        <tissue>Brain</tissue>
    </source>
</reference>
<reference key="4">
    <citation type="journal article" date="2005" name="J. Proteome Res.">
        <title>Human plasma N-glycoproteome analysis by immunoaffinity subtraction, hydrazide chemistry, and mass spectrometry.</title>
        <authorList>
            <person name="Liu T."/>
            <person name="Qian W.-J."/>
            <person name="Gritsenko M.A."/>
            <person name="Camp D.G. II"/>
            <person name="Monroe M.E."/>
            <person name="Moore R.J."/>
            <person name="Smith R.D."/>
        </authorList>
    </citation>
    <scope>GLYCOSYLATION [LARGE SCALE ANALYSIS] AT ASN-95</scope>
    <source>
        <tissue>Plasma</tissue>
    </source>
</reference>
<reference key="5">
    <citation type="journal article" date="2013" name="J. Dermatol. Sci.">
        <title>SYT14L, especially its C2 domain, is involved in regulating melanocyte differentiation.</title>
        <authorList>
            <person name="Yoo J.C."/>
            <person name="Lim T.Y."/>
            <person name="Park J.S."/>
            <person name="Hah Y.S."/>
            <person name="Park N."/>
            <person name="Hong S.G."/>
            <person name="Park J.Y."/>
            <person name="Yoon T.J."/>
        </authorList>
    </citation>
    <scope>FUNCTION</scope>
    <scope>TISSUE SPECIFICITY</scope>
</reference>
<gene>
    <name evidence="9" type="primary">CPNE9</name>
</gene>
<protein>
    <recommendedName>
        <fullName evidence="8">Copine-9</fullName>
    </recommendedName>
    <alternativeName>
        <fullName evidence="9">Copine IX</fullName>
    </alternativeName>
</protein>
<accession>Q8IYJ1</accession>
<accession>A1L430</accession>
<accession>A6NDX6</accession>
<accession>A8MSP8</accession>
<keyword id="KW-0025">Alternative splicing</keyword>
<keyword id="KW-0106">Calcium</keyword>
<keyword id="KW-0221">Differentiation</keyword>
<keyword id="KW-0325">Glycoprotein</keyword>
<keyword id="KW-0479">Metal-binding</keyword>
<keyword id="KW-1267">Proteomics identification</keyword>
<keyword id="KW-1185">Reference proteome</keyword>
<keyword id="KW-0677">Repeat</keyword>
<organism>
    <name type="scientific">Homo sapiens</name>
    <name type="common">Human</name>
    <dbReference type="NCBI Taxonomy" id="9606"/>
    <lineage>
        <taxon>Eukaryota</taxon>
        <taxon>Metazoa</taxon>
        <taxon>Chordata</taxon>
        <taxon>Craniata</taxon>
        <taxon>Vertebrata</taxon>
        <taxon>Euteleostomi</taxon>
        <taxon>Mammalia</taxon>
        <taxon>Eutheria</taxon>
        <taxon>Euarchontoglires</taxon>
        <taxon>Primates</taxon>
        <taxon>Haplorrhini</taxon>
        <taxon>Catarrhini</taxon>
        <taxon>Hominidae</taxon>
        <taxon>Homo</taxon>
    </lineage>
</organism>
<feature type="chain" id="PRO_0000277583" description="Copine-9">
    <location>
        <begin position="1"/>
        <end position="553"/>
    </location>
</feature>
<feature type="domain" description="C2 1" evidence="2">
    <location>
        <begin position="1"/>
        <end position="125"/>
    </location>
</feature>
<feature type="domain" description="C2 2" evidence="2">
    <location>
        <begin position="132"/>
        <end position="255"/>
    </location>
</feature>
<feature type="domain" description="VWFA" evidence="3">
    <location>
        <begin position="299"/>
        <end position="500"/>
    </location>
</feature>
<feature type="region of interest" description="Disordered" evidence="4">
    <location>
        <begin position="531"/>
        <end position="553"/>
    </location>
</feature>
<feature type="compositionally biased region" description="Pro residues" evidence="4">
    <location>
        <begin position="536"/>
        <end position="553"/>
    </location>
</feature>
<feature type="binding site" evidence="2">
    <location>
        <position position="163"/>
    </location>
    <ligand>
        <name>Ca(2+)</name>
        <dbReference type="ChEBI" id="CHEBI:29108"/>
        <label>1</label>
    </ligand>
</feature>
<feature type="binding site" evidence="2">
    <location>
        <position position="163"/>
    </location>
    <ligand>
        <name>Ca(2+)</name>
        <dbReference type="ChEBI" id="CHEBI:29108"/>
        <label>2</label>
    </ligand>
</feature>
<feature type="binding site" evidence="2">
    <location>
        <position position="169"/>
    </location>
    <ligand>
        <name>Ca(2+)</name>
        <dbReference type="ChEBI" id="CHEBI:29108"/>
        <label>1</label>
    </ligand>
</feature>
<feature type="binding site" evidence="2">
    <location>
        <position position="225"/>
    </location>
    <ligand>
        <name>Ca(2+)</name>
        <dbReference type="ChEBI" id="CHEBI:29108"/>
        <label>1</label>
    </ligand>
</feature>
<feature type="binding site" evidence="2">
    <location>
        <position position="225"/>
    </location>
    <ligand>
        <name>Ca(2+)</name>
        <dbReference type="ChEBI" id="CHEBI:29108"/>
        <label>2</label>
    </ligand>
</feature>
<feature type="binding site" evidence="2">
    <location>
        <position position="227"/>
    </location>
    <ligand>
        <name>Ca(2+)</name>
        <dbReference type="ChEBI" id="CHEBI:29108"/>
        <label>1</label>
    </ligand>
</feature>
<feature type="binding site" evidence="2">
    <location>
        <position position="227"/>
    </location>
    <ligand>
        <name>Ca(2+)</name>
        <dbReference type="ChEBI" id="CHEBI:29108"/>
        <label>2</label>
    </ligand>
</feature>
<feature type="binding site" evidence="2">
    <location>
        <position position="233"/>
    </location>
    <ligand>
        <name>Ca(2+)</name>
        <dbReference type="ChEBI" id="CHEBI:29108"/>
        <label>2</label>
    </ligand>
</feature>
<feature type="glycosylation site" description="N-linked (GlcNAc...) asparagine" evidence="5">
    <location>
        <position position="95"/>
    </location>
</feature>
<feature type="splice variant" id="VSP_039523" description="In isoform 2." evidence="7">
    <original>FVPFRDYVDRSGNQVLSMARLAKDVLAEIPEQLLSYMRTRDIQPRPPPPANPSPIPAPEQP</original>
    <variation>EGCCSLGTSVV</variation>
    <location>
        <begin position="493"/>
        <end position="553"/>
    </location>
</feature>
<feature type="sequence conflict" description="In Ref. 2; EAW63970." evidence="8" ref="2">
    <location>
        <position position="100"/>
    </location>
</feature>
<comment type="function">
    <text evidence="1 6">Probable calcium-dependent phospholipid-binding protein that may play a role in calcium-mediated intracellular processes (By similarity). Plays a role in dendrite formation by melanocytes (PubMed:23999003).</text>
</comment>
<comment type="cofactor">
    <cofactor evidence="2">
        <name>Ca(2+)</name>
        <dbReference type="ChEBI" id="CHEBI:29108"/>
    </cofactor>
</comment>
<comment type="alternative products">
    <event type="alternative splicing"/>
    <isoform>
        <id>Q8IYJ1-1</id>
        <name>1</name>
        <sequence type="displayed"/>
    </isoform>
    <isoform>
        <id>Q8IYJ1-2</id>
        <name>2</name>
        <sequence type="described" ref="VSP_039523"/>
    </isoform>
</comment>
<comment type="tissue specificity">
    <text evidence="6">Expressed in melanocytes (PubMed:23999003).</text>
</comment>
<comment type="similarity">
    <text evidence="8">Belongs to the copine family.</text>
</comment>
<sequence>MSLGGASERSVPATKIEITVSCRNLLDLDTFSKSDPMVVLYTQSRASQEWREFGRTEVIDNTLNPDFVRKFVLDYFFEEKQNLRFDVYNVDSKTNISKPKDFLGQAFLALGEVIGGQGSRVERTLTGVPGKKCGTILLTAEELSNCRDIATMQLCANKLDKKDFFGKSDPFLVFYRSNEDGTFTICHKTEVVKNTLNPVWQPFSIPVRALCNGDYDRTVKIDVYDWDRDGSHDFIGEFTTSYRELSKAQNQFTVYEVLNPRKKCKKKKYVNSGTVTLLSFSVDSEFTFVDYIKGGTQLNFTVAIDFTASNGNPLQPTSLHYMSPYQLSAYAMALKAVGEIIQDYDSDKLFPAYGFGAKLPPEGRISHQFPLNNNDEDPNCAGIEGVLESYFQSLRTVQLYGPTYFAPVINQVARAAAKISDGSQYYVLLIITDGVISDMTQTKEAIVSASSLPMSIIIVGVGPAMFEAMEELDGDDVRVSSRGRYAERDIVQFVPFRDYVDRSGNQVLSMARLAKDVLAEIPEQLLSYMRTRDIQPRPPPPANPSPIPAPEQP</sequence>
<name>CPNE9_HUMAN</name>
<evidence type="ECO:0000250" key="1">
    <source>
        <dbReference type="UniProtKB" id="Q99829"/>
    </source>
</evidence>
<evidence type="ECO:0000255" key="2">
    <source>
        <dbReference type="PROSITE-ProRule" id="PRU00041"/>
    </source>
</evidence>
<evidence type="ECO:0000255" key="3">
    <source>
        <dbReference type="PROSITE-ProRule" id="PRU00219"/>
    </source>
</evidence>
<evidence type="ECO:0000256" key="4">
    <source>
        <dbReference type="SAM" id="MobiDB-lite"/>
    </source>
</evidence>
<evidence type="ECO:0000269" key="5">
    <source>
    </source>
</evidence>
<evidence type="ECO:0000269" key="6">
    <source>
    </source>
</evidence>
<evidence type="ECO:0000303" key="7">
    <source>
    </source>
</evidence>
<evidence type="ECO:0000305" key="8"/>
<evidence type="ECO:0000312" key="9">
    <source>
        <dbReference type="HGNC" id="HGNC:24336"/>
    </source>
</evidence>